<gene>
    <name type="ORF">ARB_05933</name>
</gene>
<evidence type="ECO:0000250" key="1">
    <source>
        <dbReference type="UniProtKB" id="O00085"/>
    </source>
</evidence>
<evidence type="ECO:0000250" key="2">
    <source>
        <dbReference type="UniProtKB" id="O00092"/>
    </source>
</evidence>
<evidence type="ECO:0000250" key="3">
    <source>
        <dbReference type="UniProtKB" id="P34752"/>
    </source>
</evidence>
<evidence type="ECO:0000255" key="4"/>
<evidence type="ECO:0000255" key="5">
    <source>
        <dbReference type="PROSITE-ProRule" id="PRU00498"/>
    </source>
</evidence>
<evidence type="ECO:0000269" key="6">
    <source>
    </source>
</evidence>
<evidence type="ECO:0000305" key="7"/>
<evidence type="ECO:0000305" key="8">
    <source>
    </source>
</evidence>
<reference key="1">
    <citation type="journal article" date="2011" name="Genome Biol.">
        <title>Comparative and functional genomics provide insights into the pathogenicity of dermatophytic fungi.</title>
        <authorList>
            <person name="Burmester A."/>
            <person name="Shelest E."/>
            <person name="Gloeckner G."/>
            <person name="Heddergott C."/>
            <person name="Schindler S."/>
            <person name="Staib P."/>
            <person name="Heidel A."/>
            <person name="Felder M."/>
            <person name="Petzold A."/>
            <person name="Szafranski K."/>
            <person name="Feuermann M."/>
            <person name="Pedruzzi I."/>
            <person name="Priebe S."/>
            <person name="Groth M."/>
            <person name="Winkler R."/>
            <person name="Li W."/>
            <person name="Kniemeyer O."/>
            <person name="Schroeckh V."/>
            <person name="Hertweck C."/>
            <person name="Hube B."/>
            <person name="White T.C."/>
            <person name="Platzer M."/>
            <person name="Guthke R."/>
            <person name="Heitman J."/>
            <person name="Woestemeyer J."/>
            <person name="Zipfel P.F."/>
            <person name="Monod M."/>
            <person name="Brakhage A.A."/>
        </authorList>
    </citation>
    <scope>NUCLEOTIDE SEQUENCE [LARGE SCALE GENOMIC DNA]</scope>
    <source>
        <strain>ATCC MYA-4681 / CBS 112371</strain>
    </source>
</reference>
<reference key="2">
    <citation type="journal article" date="2011" name="Proteomics">
        <title>Identification of novel secreted proteases during extracellular proteolysis by dermatophytes at acidic pH.</title>
        <authorList>
            <person name="Sriranganadane D."/>
            <person name="Waridel P."/>
            <person name="Salamin K."/>
            <person name="Feuermann M."/>
            <person name="Mignon B."/>
            <person name="Staib P."/>
            <person name="Neuhaus J.M."/>
            <person name="Quadroni M."/>
            <person name="Monod M."/>
        </authorList>
    </citation>
    <scope>IDENTIFICATION BY MASS SPECTROMETRY</scope>
    <scope>SUBCELLULAR LOCATION</scope>
</reference>
<comment type="function">
    <text evidence="3">Catalyzes the phosphate monoester hydrolysis of phytic acid (myo-inositol hexakisphosphate), which results in the stepwise formation of myo-inositol pentakis-, tetrakis-, tris-, bis-, and monophosphates, as well as the liberation of inorganic phosphate (By similarity). Myo-inositol 2-monophosphate is the end product (By similarity).</text>
</comment>
<comment type="catalytic activity">
    <reaction evidence="3">
        <text>1D-myo-inositol hexakisphosphate + H2O = 1D-myo-inositol 1,2,4,5,6-pentakisphosphate + phosphate</text>
        <dbReference type="Rhea" id="RHEA:16989"/>
        <dbReference type="ChEBI" id="CHEBI:15377"/>
        <dbReference type="ChEBI" id="CHEBI:43474"/>
        <dbReference type="ChEBI" id="CHEBI:57798"/>
        <dbReference type="ChEBI" id="CHEBI:58130"/>
        <dbReference type="EC" id="3.1.3.8"/>
    </reaction>
    <physiologicalReaction direction="left-to-right" evidence="3">
        <dbReference type="Rhea" id="RHEA:16990"/>
    </physiologicalReaction>
</comment>
<comment type="catalytic activity">
    <reaction evidence="3">
        <text>1D-myo-inositol 1,2,4,5,6-pentakisphosphate + H2O = 1D-myo-inositol 1,2,5,6-tetrakisphosphate + phosphate</text>
        <dbReference type="Rhea" id="RHEA:77115"/>
        <dbReference type="ChEBI" id="CHEBI:15377"/>
        <dbReference type="ChEBI" id="CHEBI:43474"/>
        <dbReference type="ChEBI" id="CHEBI:57798"/>
        <dbReference type="ChEBI" id="CHEBI:195535"/>
    </reaction>
    <physiologicalReaction direction="left-to-right" evidence="3">
        <dbReference type="Rhea" id="RHEA:77116"/>
    </physiologicalReaction>
</comment>
<comment type="catalytic activity">
    <reaction evidence="3">
        <text>1D-myo-inositol 1,2,5,6-tetrakisphosphate + H2O = 1D-myo-inositol 1,2,6-trisphosphate + phosphate</text>
        <dbReference type="Rhea" id="RHEA:77119"/>
        <dbReference type="ChEBI" id="CHEBI:15377"/>
        <dbReference type="ChEBI" id="CHEBI:43474"/>
        <dbReference type="ChEBI" id="CHEBI:195535"/>
        <dbReference type="ChEBI" id="CHEBI:195537"/>
    </reaction>
    <physiologicalReaction direction="left-to-right" evidence="3">
        <dbReference type="Rhea" id="RHEA:77120"/>
    </physiologicalReaction>
</comment>
<comment type="catalytic activity">
    <reaction evidence="3">
        <text>1D-myo-inositol 1,2,6-trisphosphate + H2O = 1D-myo-inositol 1,2-bisphosphate + phosphate</text>
        <dbReference type="Rhea" id="RHEA:77131"/>
        <dbReference type="ChEBI" id="CHEBI:15377"/>
        <dbReference type="ChEBI" id="CHEBI:43474"/>
        <dbReference type="ChEBI" id="CHEBI:195537"/>
        <dbReference type="ChEBI" id="CHEBI:195539"/>
    </reaction>
    <physiologicalReaction direction="left-to-right" evidence="3">
        <dbReference type="Rhea" id="RHEA:77132"/>
    </physiologicalReaction>
</comment>
<comment type="catalytic activity">
    <reaction evidence="3">
        <text>1D-myo-inositol 1,2-bisphosphate + H2O = 1D-myo-inositol 2-phosphate + phosphate</text>
        <dbReference type="Rhea" id="RHEA:77135"/>
        <dbReference type="ChEBI" id="CHEBI:15377"/>
        <dbReference type="ChEBI" id="CHEBI:43474"/>
        <dbReference type="ChEBI" id="CHEBI:84142"/>
        <dbReference type="ChEBI" id="CHEBI:195539"/>
    </reaction>
    <physiologicalReaction direction="left-to-right" evidence="3">
        <dbReference type="Rhea" id="RHEA:77136"/>
    </physiologicalReaction>
</comment>
<comment type="subunit">
    <text evidence="1">Monomer.</text>
</comment>
<comment type="subcellular location">
    <subcellularLocation>
        <location evidence="6">Secreted</location>
    </subcellularLocation>
</comment>
<comment type="allergen">
    <text evidence="7">May cause an allergic reaction in human.</text>
</comment>
<comment type="biotechnology">
    <text evidence="3">Phytic acid is the major storage form of phosphorus in plant seeds and, thus, in seed-based animal feed. Phytases are therefore of considerable economic interest.</text>
</comment>
<comment type="similarity">
    <text evidence="7">Belongs to the histidine acid phosphatase family.</text>
</comment>
<sequence length="456" mass="50491">MSSMASVLFAALAISGVQVTPSRGYGCFPQYSQFWGQYSPYFSLEGRSAISSAVPPGCKITFAQSLQRHGARFPTADKSATYSSLIKRIQEDATEFKDEFAFLKDYKYNLGADDLTPFGESQLYDSGINFFQRYHGLTKDSKVFVRSAGSERVVASAHKFVEGFNKAKGSEKGGATKLDLIISEEDRRKNPIAPQGCDAFDNDETADKITDQFRSTFTQPIVDRVNKKLPGANIKIGDIKSLMAMCPFDTVARTPDASKLSPFCHLFSHEEFRHYDYLETLGKFYGHGPGNSFGPAPGIGYVNELIARLTSSPVKDNTTVDHELDDNPKTFPLGLPLYADFSHDNSMTVIFTAMGLFNATKPLSPTKITDPADASGYSASWTVPFGARAYFEKMVCDHSPSAKQEYVRVLLNDRVFPLQDCHTDFLGRCKLDDFINGLTYARSNGNWDQCEVSPPK</sequence>
<feature type="signal peptide" evidence="4">
    <location>
        <begin position="1"/>
        <end position="24"/>
    </location>
</feature>
<feature type="chain" id="PRO_0000434430" description="Phytase A" evidence="4">
    <location>
        <begin position="25"/>
        <end position="456"/>
    </location>
</feature>
<feature type="active site" description="Nucleophile" evidence="2">
    <location>
        <position position="69"/>
    </location>
</feature>
<feature type="binding site" evidence="3">
    <location>
        <position position="37"/>
    </location>
    <ligand>
        <name>1D-myo-inositol hexakisphosphate</name>
        <dbReference type="ChEBI" id="CHEBI:58130"/>
    </ligand>
</feature>
<feature type="binding site" evidence="3">
    <location>
        <position position="38"/>
    </location>
    <ligand>
        <name>1D-myo-inositol hexakisphosphate</name>
        <dbReference type="ChEBI" id="CHEBI:58130"/>
    </ligand>
</feature>
<feature type="binding site" evidence="3">
    <location>
        <position position="68"/>
    </location>
    <ligand>
        <name>1D-myo-inositol hexakisphosphate</name>
        <dbReference type="ChEBI" id="CHEBI:58130"/>
    </ligand>
</feature>
<feature type="binding site" evidence="3">
    <location>
        <position position="69"/>
    </location>
    <ligand>
        <name>1D-myo-inositol hexakisphosphate</name>
        <dbReference type="ChEBI" id="CHEBI:58130"/>
    </ligand>
</feature>
<feature type="binding site" evidence="3">
    <location>
        <position position="72"/>
    </location>
    <ligand>
        <name>1D-myo-inositol hexakisphosphate</name>
        <dbReference type="ChEBI" id="CHEBI:58130"/>
    </ligand>
</feature>
<feature type="binding site" evidence="3">
    <location>
        <position position="75"/>
    </location>
    <ligand>
        <name>1D-myo-inositol hexakisphosphate</name>
        <dbReference type="ChEBI" id="CHEBI:58130"/>
    </ligand>
</feature>
<feature type="binding site" evidence="3">
    <location>
        <position position="152"/>
    </location>
    <ligand>
        <name>1D-myo-inositol hexakisphosphate</name>
        <dbReference type="ChEBI" id="CHEBI:58130"/>
    </ligand>
</feature>
<feature type="binding site" evidence="3">
    <location>
        <position position="283"/>
    </location>
    <ligand>
        <name>1D-myo-inositol hexakisphosphate</name>
        <dbReference type="ChEBI" id="CHEBI:58130"/>
    </ligand>
</feature>
<feature type="binding site" evidence="3">
    <location>
        <position position="343"/>
    </location>
    <ligand>
        <name>1D-myo-inositol hexakisphosphate</name>
        <dbReference type="ChEBI" id="CHEBI:58130"/>
    </ligand>
</feature>
<feature type="binding site" evidence="3">
    <location>
        <position position="344"/>
    </location>
    <ligand>
        <name>1D-myo-inositol hexakisphosphate</name>
        <dbReference type="ChEBI" id="CHEBI:58130"/>
    </ligand>
</feature>
<feature type="glycosylation site" description="N-linked (GlcNAc...) asparagine" evidence="5">
    <location>
        <position position="317"/>
    </location>
</feature>
<feature type="glycosylation site" description="N-linked (GlcNAc...) asparagine" evidence="5">
    <location>
        <position position="358"/>
    </location>
</feature>
<feature type="disulfide bond" evidence="2">
    <location>
        <begin position="58"/>
        <end position="396"/>
    </location>
</feature>
<feature type="disulfide bond" evidence="2">
    <location>
        <begin position="197"/>
        <end position="450"/>
    </location>
</feature>
<feature type="disulfide bond" evidence="2">
    <location>
        <begin position="246"/>
        <end position="264"/>
    </location>
</feature>
<feature type="disulfide bond" evidence="2">
    <location>
        <begin position="421"/>
        <end position="429"/>
    </location>
</feature>
<keyword id="KW-0020">Allergen</keyword>
<keyword id="KW-1015">Disulfide bond</keyword>
<keyword id="KW-0325">Glycoprotein</keyword>
<keyword id="KW-0378">Hydrolase</keyword>
<keyword id="KW-1185">Reference proteome</keyword>
<keyword id="KW-0964">Secreted</keyword>
<keyword id="KW-0732">Signal</keyword>
<dbReference type="EC" id="3.1.3.-" evidence="3"/>
<dbReference type="EC" id="3.1.3.8" evidence="3"/>
<dbReference type="EMBL" id="ABSU01000004">
    <property type="protein sequence ID" value="EFE34977.1"/>
    <property type="molecule type" value="Genomic_DNA"/>
</dbReference>
<dbReference type="RefSeq" id="XP_003015622.1">
    <property type="nucleotide sequence ID" value="XM_003015576.1"/>
</dbReference>
<dbReference type="SMR" id="D4ANW6"/>
<dbReference type="STRING" id="663331.D4ANW6"/>
<dbReference type="GeneID" id="9525903"/>
<dbReference type="KEGG" id="abe:ARB_05933"/>
<dbReference type="eggNOG" id="KOG1382">
    <property type="taxonomic scope" value="Eukaryota"/>
</dbReference>
<dbReference type="HOGENOM" id="CLU_020880_0_0_1"/>
<dbReference type="OMA" id="CRVTFAQ"/>
<dbReference type="Proteomes" id="UP000008866">
    <property type="component" value="Unassembled WGS sequence"/>
</dbReference>
<dbReference type="GO" id="GO:0005576">
    <property type="term" value="C:extracellular region"/>
    <property type="evidence" value="ECO:0007669"/>
    <property type="project" value="UniProtKB-SubCell"/>
</dbReference>
<dbReference type="GO" id="GO:0016158">
    <property type="term" value="F:3-phytase activity"/>
    <property type="evidence" value="ECO:0007669"/>
    <property type="project" value="UniProtKB-EC"/>
</dbReference>
<dbReference type="GO" id="GO:0003993">
    <property type="term" value="F:acid phosphatase activity"/>
    <property type="evidence" value="ECO:0007669"/>
    <property type="project" value="TreeGrafter"/>
</dbReference>
<dbReference type="CDD" id="cd07061">
    <property type="entry name" value="HP_HAP_like"/>
    <property type="match status" value="1"/>
</dbReference>
<dbReference type="Gene3D" id="3.40.50.1240">
    <property type="entry name" value="Phosphoglycerate mutase-like"/>
    <property type="match status" value="1"/>
</dbReference>
<dbReference type="InterPro" id="IPR033379">
    <property type="entry name" value="Acid_Pase_AS"/>
</dbReference>
<dbReference type="InterPro" id="IPR000560">
    <property type="entry name" value="His_Pase_clade-2"/>
</dbReference>
<dbReference type="InterPro" id="IPR029033">
    <property type="entry name" value="His_PPase_superfam"/>
</dbReference>
<dbReference type="InterPro" id="IPR016274">
    <property type="entry name" value="Histidine_acid_Pase_euk"/>
</dbReference>
<dbReference type="PANTHER" id="PTHR20963:SF24">
    <property type="entry name" value="3-PHYTASE B"/>
    <property type="match status" value="1"/>
</dbReference>
<dbReference type="PANTHER" id="PTHR20963">
    <property type="entry name" value="MULTIPLE INOSITOL POLYPHOSPHATE PHOSPHATASE-RELATED"/>
    <property type="match status" value="1"/>
</dbReference>
<dbReference type="Pfam" id="PF00328">
    <property type="entry name" value="His_Phos_2"/>
    <property type="match status" value="1"/>
</dbReference>
<dbReference type="PIRSF" id="PIRSF000894">
    <property type="entry name" value="Acid_phosphatase"/>
    <property type="match status" value="1"/>
</dbReference>
<dbReference type="SUPFAM" id="SSF53254">
    <property type="entry name" value="Phosphoglycerate mutase-like"/>
    <property type="match status" value="1"/>
</dbReference>
<dbReference type="PROSITE" id="PS00616">
    <property type="entry name" value="HIS_ACID_PHOSPHAT_1"/>
    <property type="match status" value="1"/>
</dbReference>
<dbReference type="PROSITE" id="PS00778">
    <property type="entry name" value="HIS_ACID_PHOSPHAT_2"/>
    <property type="match status" value="1"/>
</dbReference>
<protein>
    <recommendedName>
        <fullName evidence="3">Phytase A</fullName>
        <ecNumber evidence="3">3.1.3.-</ecNumber>
        <ecNumber evidence="3">3.1.3.8</ecNumber>
    </recommendedName>
    <alternativeName>
        <fullName evidence="8">Allergen Asp n 25 homolog</fullName>
    </alternativeName>
    <alternativeName>
        <fullName evidence="3">Histidine acid phosphatase phyA</fullName>
        <shortName evidence="3">HAP</shortName>
    </alternativeName>
    <alternativeName>
        <fullName evidence="3">Myo-inositol hexakisphosphate phosphohydrolase A</fullName>
    </alternativeName>
    <alternativeName>
        <fullName evidence="3">Myo-inositol-hexaphosphate 3-phosphohydrolase A</fullName>
    </alternativeName>
</protein>
<name>PHYA_ARTBC</name>
<accession>D4ANW6</accession>
<organism>
    <name type="scientific">Arthroderma benhamiae (strain ATCC MYA-4681 / CBS 112371)</name>
    <name type="common">Trichophyton mentagrophytes</name>
    <dbReference type="NCBI Taxonomy" id="663331"/>
    <lineage>
        <taxon>Eukaryota</taxon>
        <taxon>Fungi</taxon>
        <taxon>Dikarya</taxon>
        <taxon>Ascomycota</taxon>
        <taxon>Pezizomycotina</taxon>
        <taxon>Eurotiomycetes</taxon>
        <taxon>Eurotiomycetidae</taxon>
        <taxon>Onygenales</taxon>
        <taxon>Arthrodermataceae</taxon>
        <taxon>Trichophyton</taxon>
    </lineage>
</organism>
<proteinExistence type="evidence at protein level"/>